<proteinExistence type="evidence at protein level"/>
<accession>Q9SHP0</accession>
<accession>Q0WPU8</accession>
<name>SERB2_ARATH</name>
<sequence length="422" mass="46634">MAASTNSFLIGNQTQIPSLKPKSISQSFIHFTKPNTINLTTRTKSVSIRCASASTTVGSEQRVINFAAGPAALPENVLLKAQSDLYNWRGSGMSVMEMSHRGKEFLSIIQKAESDLRQLLEIPSEYSVLFLQGGATTQFAALPLNLCKSDDSVDYIVTGSWGDKAFKEAKKYCNPKVIWSGKSEKYTKVPTFDGLEQSSDAKYLHICANETIHGVEFKDYPLVENPDGVLIADMSSNFCSKPVDVSKFGVIYAGAQKNVGPSGVTIVIIRKDLIGNARDITPVMLDYKIHDENSSLYNTPPCFGIYMCGLVFDDLLEQGGLKEVEKKNQRKAELLYNAIDESRGFFRCPVEKSVRSLMNVPFTLEKSELEAEFIKEAAKEKMVQLKGHRSVGGMRASIYNAMPLAGVEKLVAFMKDFQARHA</sequence>
<gene>
    <name type="primary">PSAT2</name>
    <name type="ordered locus">At2g17630</name>
    <name type="ORF">T19E12.3</name>
</gene>
<reference key="1">
    <citation type="journal article" date="1999" name="Nature">
        <title>Sequence and analysis of chromosome 2 of the plant Arabidopsis thaliana.</title>
        <authorList>
            <person name="Lin X."/>
            <person name="Kaul S."/>
            <person name="Rounsley S.D."/>
            <person name="Shea T.P."/>
            <person name="Benito M.-I."/>
            <person name="Town C.D."/>
            <person name="Fujii C.Y."/>
            <person name="Mason T.M."/>
            <person name="Bowman C.L."/>
            <person name="Barnstead M.E."/>
            <person name="Feldblyum T.V."/>
            <person name="Buell C.R."/>
            <person name="Ketchum K.A."/>
            <person name="Lee J.J."/>
            <person name="Ronning C.M."/>
            <person name="Koo H.L."/>
            <person name="Moffat K.S."/>
            <person name="Cronin L.A."/>
            <person name="Shen M."/>
            <person name="Pai G."/>
            <person name="Van Aken S."/>
            <person name="Umayam L."/>
            <person name="Tallon L.J."/>
            <person name="Gill J.E."/>
            <person name="Adams M.D."/>
            <person name="Carrera A.J."/>
            <person name="Creasy T.H."/>
            <person name="Goodman H.M."/>
            <person name="Somerville C.R."/>
            <person name="Copenhaver G.P."/>
            <person name="Preuss D."/>
            <person name="Nierman W.C."/>
            <person name="White O."/>
            <person name="Eisen J.A."/>
            <person name="Salzberg S.L."/>
            <person name="Fraser C.M."/>
            <person name="Venter J.C."/>
        </authorList>
    </citation>
    <scope>NUCLEOTIDE SEQUENCE [LARGE SCALE GENOMIC DNA]</scope>
    <source>
        <strain>cv. Columbia</strain>
    </source>
</reference>
<reference key="2">
    <citation type="journal article" date="2017" name="Plant J.">
        <title>Araport11: a complete reannotation of the Arabidopsis thaliana reference genome.</title>
        <authorList>
            <person name="Cheng C.Y."/>
            <person name="Krishnakumar V."/>
            <person name="Chan A.P."/>
            <person name="Thibaud-Nissen F."/>
            <person name="Schobel S."/>
            <person name="Town C.D."/>
        </authorList>
    </citation>
    <scope>GENOME REANNOTATION</scope>
    <source>
        <strain>cv. Columbia</strain>
    </source>
</reference>
<reference key="3">
    <citation type="submission" date="2005-05" db="EMBL/GenBank/DDBJ databases">
        <title>Arabidopsis ORF clones.</title>
        <authorList>
            <person name="Kim C.J."/>
            <person name="Chen H."/>
            <person name="Cheuk R."/>
            <person name="Shinn P."/>
            <person name="Ecker J.R."/>
        </authorList>
    </citation>
    <scope>NUCLEOTIDE SEQUENCE [LARGE SCALE MRNA]</scope>
</reference>
<reference key="4">
    <citation type="submission" date="2006-06" db="EMBL/GenBank/DDBJ databases">
        <title>Arabidopsis ORF clones.</title>
        <authorList>
            <person name="Shinn P."/>
            <person name="Chen H."/>
            <person name="Kim C.J."/>
            <person name="Quinitio C."/>
            <person name="Ecker J.R."/>
        </authorList>
    </citation>
    <scope>NUCLEOTIDE SEQUENCE [LARGE SCALE MRNA]</scope>
</reference>
<reference key="5">
    <citation type="submission" date="2006-07" db="EMBL/GenBank/DDBJ databases">
        <title>Large-scale analysis of RIKEN Arabidopsis full-length (RAFL) cDNAs.</title>
        <authorList>
            <person name="Totoki Y."/>
            <person name="Seki M."/>
            <person name="Ishida J."/>
            <person name="Nakajima M."/>
            <person name="Enju A."/>
            <person name="Kamiya A."/>
            <person name="Narusaka M."/>
            <person name="Shin-i T."/>
            <person name="Nakagawa M."/>
            <person name="Sakamoto N."/>
            <person name="Oishi K."/>
            <person name="Kohara Y."/>
            <person name="Kobayashi M."/>
            <person name="Toyoda A."/>
            <person name="Sakaki Y."/>
            <person name="Sakurai T."/>
            <person name="Iida K."/>
            <person name="Akiyama K."/>
            <person name="Satou M."/>
            <person name="Toyoda T."/>
            <person name="Konagaya A."/>
            <person name="Carninci P."/>
            <person name="Kawai J."/>
            <person name="Hayashizaki Y."/>
            <person name="Shinozaki K."/>
        </authorList>
    </citation>
    <scope>NUCLEOTIDE SEQUENCE [LARGE SCALE MRNA]</scope>
    <source>
        <strain>cv. Columbia</strain>
    </source>
</reference>
<reference key="6">
    <citation type="journal article" date="2012" name="Mol. Cell. Proteomics">
        <title>Comparative large-scale characterisation of plant vs. mammal proteins reveals similar and idiosyncratic N-alpha acetylation features.</title>
        <authorList>
            <person name="Bienvenut W.V."/>
            <person name="Sumpton D."/>
            <person name="Martinez A."/>
            <person name="Lilla S."/>
            <person name="Espagne C."/>
            <person name="Meinnel T."/>
            <person name="Giglione C."/>
        </authorList>
    </citation>
    <scope>ACETYLATION [LARGE SCALE ANALYSIS] AT ALA-51</scope>
    <scope>CLEAVAGE OF TRANSIT PEPTIDE [LARGE SCALE ANALYSIS] AFTER CYS-50</scope>
    <scope>IDENTIFICATION BY MASS SPECTROMETRY [LARGE SCALE ANALYSIS]</scope>
</reference>
<reference key="7">
    <citation type="journal article" date="2013" name="Plant Cell">
        <title>Arabidopsis phosphoglycerate dehydrogenase1 of the phosphoserine pathway is essential for development and required for ammonium assimilation and tryptophan biosynthesis.</title>
        <authorList>
            <person name="Benstein R.M."/>
            <person name="Ludewig K."/>
            <person name="Wulfert S."/>
            <person name="Wittek S."/>
            <person name="Gigolashvili T."/>
            <person name="Frerigmann H."/>
            <person name="Gierth M."/>
            <person name="Fluegge U.I."/>
            <person name="Krueger S."/>
        </authorList>
    </citation>
    <scope>FUNCTION</scope>
</reference>
<comment type="function">
    <text evidence="2">Involved in the plastidial phosphorylated pathway of serine biosynthesis (PPSB). Catalyzes the reversible conversion of 3-phosphohydroxypyruvate to phosphoserine.</text>
</comment>
<comment type="catalytic activity">
    <reaction>
        <text>O-phospho-L-serine + 2-oxoglutarate = 3-phosphooxypyruvate + L-glutamate</text>
        <dbReference type="Rhea" id="RHEA:14329"/>
        <dbReference type="ChEBI" id="CHEBI:16810"/>
        <dbReference type="ChEBI" id="CHEBI:18110"/>
        <dbReference type="ChEBI" id="CHEBI:29985"/>
        <dbReference type="ChEBI" id="CHEBI:57524"/>
        <dbReference type="EC" id="2.6.1.52"/>
    </reaction>
</comment>
<comment type="catalytic activity">
    <reaction>
        <text>4-(phosphooxy)-L-threonine + 2-oxoglutarate = (R)-3-hydroxy-2-oxo-4-phosphooxybutanoate + L-glutamate</text>
        <dbReference type="Rhea" id="RHEA:16573"/>
        <dbReference type="ChEBI" id="CHEBI:16810"/>
        <dbReference type="ChEBI" id="CHEBI:29985"/>
        <dbReference type="ChEBI" id="CHEBI:58452"/>
        <dbReference type="ChEBI" id="CHEBI:58538"/>
        <dbReference type="EC" id="2.6.1.52"/>
    </reaction>
</comment>
<comment type="cofactor">
    <cofactor evidence="1">
        <name>pyridoxal 5'-phosphate</name>
        <dbReference type="ChEBI" id="CHEBI:597326"/>
    </cofactor>
</comment>
<comment type="pathway">
    <text>Amino-acid biosynthesis; L-serine biosynthesis; L-serine from 3-phospho-D-glycerate: step 2/3.</text>
</comment>
<comment type="subcellular location">
    <subcellularLocation>
        <location evidence="3">Plastid</location>
        <location evidence="3">Chloroplast</location>
    </subcellularLocation>
</comment>
<comment type="similarity">
    <text evidence="3">Belongs to the class-V pyridoxal-phosphate-dependent aminotransferase family. SerC subfamily.</text>
</comment>
<protein>
    <recommendedName>
        <fullName>Phosphoserine aminotransferase 2, chloroplastic</fullName>
        <shortName>AtPSAT2</shortName>
        <ecNumber>2.6.1.52</ecNumber>
    </recommendedName>
</protein>
<keyword id="KW-0007">Acetylation</keyword>
<keyword id="KW-0028">Amino-acid biosynthesis</keyword>
<keyword id="KW-0032">Aminotransferase</keyword>
<keyword id="KW-0150">Chloroplast</keyword>
<keyword id="KW-0934">Plastid</keyword>
<keyword id="KW-0663">Pyridoxal phosphate</keyword>
<keyword id="KW-1185">Reference proteome</keyword>
<keyword id="KW-0718">Serine biosynthesis</keyword>
<keyword id="KW-0808">Transferase</keyword>
<keyword id="KW-0809">Transit peptide</keyword>
<feature type="transit peptide" description="Chloroplast" evidence="4">
    <location>
        <begin position="1"/>
        <end position="50"/>
    </location>
</feature>
<feature type="chain" id="PRO_0000430238" description="Phosphoserine aminotransferase 2, chloroplastic">
    <location>
        <begin position="51"/>
        <end position="422"/>
    </location>
</feature>
<feature type="binding site" evidence="1">
    <location>
        <position position="101"/>
    </location>
    <ligand>
        <name>L-glutamate</name>
        <dbReference type="ChEBI" id="CHEBI:29985"/>
    </ligand>
</feature>
<feature type="binding site" evidence="1">
    <location>
        <begin position="135"/>
        <end position="136"/>
    </location>
    <ligand>
        <name>pyridoxal 5'-phosphate</name>
        <dbReference type="ChEBI" id="CHEBI:597326"/>
    </ligand>
</feature>
<feature type="binding site" evidence="1">
    <location>
        <position position="161"/>
    </location>
    <ligand>
        <name>pyridoxal 5'-phosphate</name>
        <dbReference type="ChEBI" id="CHEBI:597326"/>
    </ligand>
</feature>
<feature type="binding site" evidence="1">
    <location>
        <position position="211"/>
    </location>
    <ligand>
        <name>pyridoxal 5'-phosphate</name>
        <dbReference type="ChEBI" id="CHEBI:597326"/>
    </ligand>
</feature>
<feature type="binding site" evidence="1">
    <location>
        <position position="233"/>
    </location>
    <ligand>
        <name>pyridoxal 5'-phosphate</name>
        <dbReference type="ChEBI" id="CHEBI:597326"/>
    </ligand>
</feature>
<feature type="binding site" evidence="1">
    <location>
        <position position="256"/>
    </location>
    <ligand>
        <name>pyridoxal 5'-phosphate</name>
        <dbReference type="ChEBI" id="CHEBI:597326"/>
    </ligand>
</feature>
<feature type="binding site" evidence="1">
    <location>
        <begin position="298"/>
        <end position="299"/>
    </location>
    <ligand>
        <name>pyridoxal 5'-phosphate</name>
        <dbReference type="ChEBI" id="CHEBI:597326"/>
    </ligand>
</feature>
<feature type="modified residue" description="N-acetylalanine" evidence="4">
    <location>
        <position position="51"/>
    </location>
</feature>
<feature type="modified residue" description="N6-(pyridoxal phosphate)lysine" evidence="1">
    <location>
        <position position="257"/>
    </location>
</feature>
<feature type="sequence conflict" description="In Ref. 5; BAF00851." evidence="3" ref="5">
    <original>V</original>
    <variation>I</variation>
    <location>
        <position position="350"/>
    </location>
</feature>
<feature type="sequence conflict" description="In Ref. 5; BAF00851." evidence="3" ref="5">
    <original>E</original>
    <variation>K</variation>
    <location>
        <position position="376"/>
    </location>
</feature>
<evidence type="ECO:0000250" key="1"/>
<evidence type="ECO:0000269" key="2">
    <source>
    </source>
</evidence>
<evidence type="ECO:0000305" key="3"/>
<evidence type="ECO:0007744" key="4">
    <source>
    </source>
</evidence>
<dbReference type="EC" id="2.6.1.52"/>
<dbReference type="EMBL" id="AC007509">
    <property type="protein sequence ID" value="AAD32948.1"/>
    <property type="molecule type" value="Genomic_DNA"/>
</dbReference>
<dbReference type="EMBL" id="CP002685">
    <property type="protein sequence ID" value="AEC06659.1"/>
    <property type="molecule type" value="Genomic_DNA"/>
</dbReference>
<dbReference type="EMBL" id="BT023418">
    <property type="protein sequence ID" value="AAY56409.1"/>
    <property type="molecule type" value="mRNA"/>
</dbReference>
<dbReference type="EMBL" id="BT025981">
    <property type="protein sequence ID" value="ABG25070.1"/>
    <property type="molecule type" value="mRNA"/>
</dbReference>
<dbReference type="EMBL" id="AK228962">
    <property type="protein sequence ID" value="BAF00851.1"/>
    <property type="molecule type" value="mRNA"/>
</dbReference>
<dbReference type="PIR" id="E84554">
    <property type="entry name" value="E84554"/>
</dbReference>
<dbReference type="RefSeq" id="NP_179354.1">
    <property type="nucleotide sequence ID" value="NM_127317.5"/>
</dbReference>
<dbReference type="SMR" id="Q9SHP0"/>
<dbReference type="BioGRID" id="1627">
    <property type="interactions" value="13"/>
</dbReference>
<dbReference type="FunCoup" id="Q9SHP0">
    <property type="interactions" value="2102"/>
</dbReference>
<dbReference type="STRING" id="3702.Q9SHP0"/>
<dbReference type="iPTMnet" id="Q9SHP0"/>
<dbReference type="PaxDb" id="3702-AT2G17630.1"/>
<dbReference type="ProteomicsDB" id="232785"/>
<dbReference type="EnsemblPlants" id="AT2G17630.1">
    <property type="protein sequence ID" value="AT2G17630.1"/>
    <property type="gene ID" value="AT2G17630"/>
</dbReference>
<dbReference type="GeneID" id="816270"/>
<dbReference type="Gramene" id="AT2G17630.1">
    <property type="protein sequence ID" value="AT2G17630.1"/>
    <property type="gene ID" value="AT2G17630"/>
</dbReference>
<dbReference type="KEGG" id="ath:AT2G17630"/>
<dbReference type="Araport" id="AT2G17630"/>
<dbReference type="TAIR" id="AT2G17630">
    <property type="gene designation" value="PSAT2"/>
</dbReference>
<dbReference type="eggNOG" id="KOG2790">
    <property type="taxonomic scope" value="Eukaryota"/>
</dbReference>
<dbReference type="HOGENOM" id="CLU_034866_0_2_1"/>
<dbReference type="InParanoid" id="Q9SHP0"/>
<dbReference type="OMA" id="GFEQTPH"/>
<dbReference type="PhylomeDB" id="Q9SHP0"/>
<dbReference type="BioCyc" id="ARA:AT2G17630-MONOMER"/>
<dbReference type="BRENDA" id="2.6.1.52">
    <property type="organism ID" value="399"/>
</dbReference>
<dbReference type="UniPathway" id="UPA00135">
    <property type="reaction ID" value="UER00197"/>
</dbReference>
<dbReference type="CD-CODE" id="4299E36E">
    <property type="entry name" value="Nucleolus"/>
</dbReference>
<dbReference type="PRO" id="PR:Q9SHP0"/>
<dbReference type="Proteomes" id="UP000006548">
    <property type="component" value="Chromosome 2"/>
</dbReference>
<dbReference type="ExpressionAtlas" id="Q9SHP0">
    <property type="expression patterns" value="baseline and differential"/>
</dbReference>
<dbReference type="GO" id="GO:0009507">
    <property type="term" value="C:chloroplast"/>
    <property type="evidence" value="ECO:0007005"/>
    <property type="project" value="TAIR"/>
</dbReference>
<dbReference type="GO" id="GO:0009570">
    <property type="term" value="C:chloroplast stroma"/>
    <property type="evidence" value="ECO:0007005"/>
    <property type="project" value="TAIR"/>
</dbReference>
<dbReference type="GO" id="GO:0009534">
    <property type="term" value="C:chloroplast thylakoid"/>
    <property type="evidence" value="ECO:0007005"/>
    <property type="project" value="TAIR"/>
</dbReference>
<dbReference type="GO" id="GO:0004648">
    <property type="term" value="F:O-phospho-L-serine:2-oxoglutarate aminotransferase activity"/>
    <property type="evidence" value="ECO:0007669"/>
    <property type="project" value="UniProtKB-EC"/>
</dbReference>
<dbReference type="GO" id="GO:0006564">
    <property type="term" value="P:L-serine biosynthetic process"/>
    <property type="evidence" value="ECO:0007669"/>
    <property type="project" value="UniProtKB-KW"/>
</dbReference>
<dbReference type="CDD" id="cd00611">
    <property type="entry name" value="PSAT_like"/>
    <property type="match status" value="1"/>
</dbReference>
<dbReference type="FunFam" id="3.40.640.10:FF:000010">
    <property type="entry name" value="Phosphoserine aminotransferase"/>
    <property type="match status" value="1"/>
</dbReference>
<dbReference type="FunFam" id="3.90.1150.10:FF:000006">
    <property type="entry name" value="Phosphoserine aminotransferase"/>
    <property type="match status" value="1"/>
</dbReference>
<dbReference type="Gene3D" id="3.90.1150.10">
    <property type="entry name" value="Aspartate Aminotransferase, domain 1"/>
    <property type="match status" value="1"/>
</dbReference>
<dbReference type="Gene3D" id="3.40.640.10">
    <property type="entry name" value="Type I PLP-dependent aspartate aminotransferase-like (Major domain)"/>
    <property type="match status" value="1"/>
</dbReference>
<dbReference type="HAMAP" id="MF_00160">
    <property type="entry name" value="SerC_aminotrans_5"/>
    <property type="match status" value="1"/>
</dbReference>
<dbReference type="InterPro" id="IPR000192">
    <property type="entry name" value="Aminotrans_V_dom"/>
</dbReference>
<dbReference type="InterPro" id="IPR020578">
    <property type="entry name" value="Aminotrans_V_PyrdxlP_BS"/>
</dbReference>
<dbReference type="InterPro" id="IPR022278">
    <property type="entry name" value="Pser_aminoTfrase"/>
</dbReference>
<dbReference type="InterPro" id="IPR015424">
    <property type="entry name" value="PyrdxlP-dep_Trfase"/>
</dbReference>
<dbReference type="InterPro" id="IPR015421">
    <property type="entry name" value="PyrdxlP-dep_Trfase_major"/>
</dbReference>
<dbReference type="InterPro" id="IPR015422">
    <property type="entry name" value="PyrdxlP-dep_Trfase_small"/>
</dbReference>
<dbReference type="NCBIfam" id="NF003764">
    <property type="entry name" value="PRK05355.1"/>
    <property type="match status" value="1"/>
</dbReference>
<dbReference type="NCBIfam" id="TIGR01364">
    <property type="entry name" value="serC_1"/>
    <property type="match status" value="1"/>
</dbReference>
<dbReference type="PANTHER" id="PTHR43247">
    <property type="entry name" value="PHOSPHOSERINE AMINOTRANSFERASE"/>
    <property type="match status" value="1"/>
</dbReference>
<dbReference type="PANTHER" id="PTHR43247:SF1">
    <property type="entry name" value="PHOSPHOSERINE AMINOTRANSFERASE"/>
    <property type="match status" value="1"/>
</dbReference>
<dbReference type="Pfam" id="PF00266">
    <property type="entry name" value="Aminotran_5"/>
    <property type="match status" value="1"/>
</dbReference>
<dbReference type="SUPFAM" id="SSF53383">
    <property type="entry name" value="PLP-dependent transferases"/>
    <property type="match status" value="1"/>
</dbReference>
<dbReference type="PROSITE" id="PS00595">
    <property type="entry name" value="AA_TRANSFER_CLASS_5"/>
    <property type="match status" value="1"/>
</dbReference>
<organism>
    <name type="scientific">Arabidopsis thaliana</name>
    <name type="common">Mouse-ear cress</name>
    <dbReference type="NCBI Taxonomy" id="3702"/>
    <lineage>
        <taxon>Eukaryota</taxon>
        <taxon>Viridiplantae</taxon>
        <taxon>Streptophyta</taxon>
        <taxon>Embryophyta</taxon>
        <taxon>Tracheophyta</taxon>
        <taxon>Spermatophyta</taxon>
        <taxon>Magnoliopsida</taxon>
        <taxon>eudicotyledons</taxon>
        <taxon>Gunneridae</taxon>
        <taxon>Pentapetalae</taxon>
        <taxon>rosids</taxon>
        <taxon>malvids</taxon>
        <taxon>Brassicales</taxon>
        <taxon>Brassicaceae</taxon>
        <taxon>Camelineae</taxon>
        <taxon>Arabidopsis</taxon>
    </lineage>
</organism>